<name>MNME_NITV4</name>
<sequence length="457" mass="48235">MQHDDTIAAIATPLGQGGIGIIRISGPASLEVLRALFRPSSSRFGGFRPWTLHHGTITDGCDPLDDVLAVHMPGPRTFTGEDVSEIHCHGGSGVLAAVLEACVRHGARYAERGEFTRRAFLNGRMDLTQAEAVAEMIAAPSREGMRLAQAKLDGLLGQRVGALRARLDALRMQLCVAVDFPEEEVECLAPEAFLAEIEAVRQGVVELSAGYARTRCWQDGALVVLAGQVNAGKSSLMNALLGRRRAIVTDLPGTTRDFIEEPLNLSGLAIRLADTAGLRETGDIVEQEGVRMSRDLVAQADLVLLVTDATQGLQGPELELLRHAGPERVLVVFNKTDLLEGRILPSAPEGCRSVHVAAASGDGVESLVTAIRAAVLAATGAGEPEAGELAPNMRQAAALDKAATILDELAGDIRAHVPYDLCGVRLDGACAALMDVTGQSTPEAILDAIFASFCIGK</sequence>
<proteinExistence type="inferred from homology"/>
<feature type="chain" id="PRO_0000345775" description="tRNA modification GTPase MnmE">
    <location>
        <begin position="1"/>
        <end position="457"/>
    </location>
</feature>
<feature type="domain" description="TrmE-type G">
    <location>
        <begin position="220"/>
        <end position="376"/>
    </location>
</feature>
<feature type="binding site" evidence="1">
    <location>
        <position position="23"/>
    </location>
    <ligand>
        <name>(6S)-5-formyl-5,6,7,8-tetrahydrofolate</name>
        <dbReference type="ChEBI" id="CHEBI:57457"/>
    </ligand>
</feature>
<feature type="binding site" evidence="1">
    <location>
        <position position="85"/>
    </location>
    <ligand>
        <name>(6S)-5-formyl-5,6,7,8-tetrahydrofolate</name>
        <dbReference type="ChEBI" id="CHEBI:57457"/>
    </ligand>
</feature>
<feature type="binding site" evidence="1">
    <location>
        <position position="124"/>
    </location>
    <ligand>
        <name>(6S)-5-formyl-5,6,7,8-tetrahydrofolate</name>
        <dbReference type="ChEBI" id="CHEBI:57457"/>
    </ligand>
</feature>
<feature type="binding site" evidence="1">
    <location>
        <begin position="230"/>
        <end position="235"/>
    </location>
    <ligand>
        <name>GTP</name>
        <dbReference type="ChEBI" id="CHEBI:37565"/>
    </ligand>
</feature>
<feature type="binding site" evidence="1">
    <location>
        <position position="230"/>
    </location>
    <ligand>
        <name>K(+)</name>
        <dbReference type="ChEBI" id="CHEBI:29103"/>
    </ligand>
</feature>
<feature type="binding site" evidence="1">
    <location>
        <position position="234"/>
    </location>
    <ligand>
        <name>Mg(2+)</name>
        <dbReference type="ChEBI" id="CHEBI:18420"/>
    </ligand>
</feature>
<feature type="binding site" evidence="1">
    <location>
        <begin position="249"/>
        <end position="255"/>
    </location>
    <ligand>
        <name>GTP</name>
        <dbReference type="ChEBI" id="CHEBI:37565"/>
    </ligand>
</feature>
<feature type="binding site" evidence="1">
    <location>
        <position position="249"/>
    </location>
    <ligand>
        <name>K(+)</name>
        <dbReference type="ChEBI" id="CHEBI:29103"/>
    </ligand>
</feature>
<feature type="binding site" evidence="1">
    <location>
        <position position="251"/>
    </location>
    <ligand>
        <name>K(+)</name>
        <dbReference type="ChEBI" id="CHEBI:29103"/>
    </ligand>
</feature>
<feature type="binding site" evidence="1">
    <location>
        <position position="254"/>
    </location>
    <ligand>
        <name>K(+)</name>
        <dbReference type="ChEBI" id="CHEBI:29103"/>
    </ligand>
</feature>
<feature type="binding site" evidence="1">
    <location>
        <position position="255"/>
    </location>
    <ligand>
        <name>Mg(2+)</name>
        <dbReference type="ChEBI" id="CHEBI:18420"/>
    </ligand>
</feature>
<feature type="binding site" evidence="1">
    <location>
        <begin position="274"/>
        <end position="277"/>
    </location>
    <ligand>
        <name>GTP</name>
        <dbReference type="ChEBI" id="CHEBI:37565"/>
    </ligand>
</feature>
<feature type="binding site" evidence="1">
    <location>
        <position position="457"/>
    </location>
    <ligand>
        <name>(6S)-5-formyl-5,6,7,8-tetrahydrofolate</name>
        <dbReference type="ChEBI" id="CHEBI:57457"/>
    </ligand>
</feature>
<dbReference type="EC" id="3.6.-.-" evidence="1"/>
<dbReference type="EMBL" id="CP000527">
    <property type="protein sequence ID" value="ABM28931.1"/>
    <property type="molecule type" value="Genomic_DNA"/>
</dbReference>
<dbReference type="RefSeq" id="WP_011792542.1">
    <property type="nucleotide sequence ID" value="NC_008751.1"/>
</dbReference>
<dbReference type="SMR" id="A1VER5"/>
<dbReference type="KEGG" id="dvl:Dvul_1915"/>
<dbReference type="HOGENOM" id="CLU_019624_4_1_7"/>
<dbReference type="Proteomes" id="UP000009173">
    <property type="component" value="Chromosome"/>
</dbReference>
<dbReference type="GO" id="GO:0005829">
    <property type="term" value="C:cytosol"/>
    <property type="evidence" value="ECO:0007669"/>
    <property type="project" value="TreeGrafter"/>
</dbReference>
<dbReference type="GO" id="GO:0005525">
    <property type="term" value="F:GTP binding"/>
    <property type="evidence" value="ECO:0007669"/>
    <property type="project" value="UniProtKB-UniRule"/>
</dbReference>
<dbReference type="GO" id="GO:0003924">
    <property type="term" value="F:GTPase activity"/>
    <property type="evidence" value="ECO:0007669"/>
    <property type="project" value="UniProtKB-UniRule"/>
</dbReference>
<dbReference type="GO" id="GO:0046872">
    <property type="term" value="F:metal ion binding"/>
    <property type="evidence" value="ECO:0007669"/>
    <property type="project" value="UniProtKB-KW"/>
</dbReference>
<dbReference type="GO" id="GO:0030488">
    <property type="term" value="P:tRNA methylation"/>
    <property type="evidence" value="ECO:0007669"/>
    <property type="project" value="TreeGrafter"/>
</dbReference>
<dbReference type="GO" id="GO:0002098">
    <property type="term" value="P:tRNA wobble uridine modification"/>
    <property type="evidence" value="ECO:0007669"/>
    <property type="project" value="TreeGrafter"/>
</dbReference>
<dbReference type="CDD" id="cd04164">
    <property type="entry name" value="trmE"/>
    <property type="match status" value="1"/>
</dbReference>
<dbReference type="CDD" id="cd14858">
    <property type="entry name" value="TrmE_N"/>
    <property type="match status" value="1"/>
</dbReference>
<dbReference type="Gene3D" id="3.40.50.300">
    <property type="entry name" value="P-loop containing nucleotide triphosphate hydrolases"/>
    <property type="match status" value="1"/>
</dbReference>
<dbReference type="Gene3D" id="3.30.1360.120">
    <property type="entry name" value="Probable tRNA modification gtpase trme, domain 1"/>
    <property type="match status" value="1"/>
</dbReference>
<dbReference type="Gene3D" id="1.20.120.430">
    <property type="entry name" value="tRNA modification GTPase MnmE domain 2"/>
    <property type="match status" value="1"/>
</dbReference>
<dbReference type="HAMAP" id="MF_00379">
    <property type="entry name" value="GTPase_MnmE"/>
    <property type="match status" value="1"/>
</dbReference>
<dbReference type="InterPro" id="IPR031168">
    <property type="entry name" value="G_TrmE"/>
</dbReference>
<dbReference type="InterPro" id="IPR006073">
    <property type="entry name" value="GTP-bd"/>
</dbReference>
<dbReference type="InterPro" id="IPR018948">
    <property type="entry name" value="GTP-bd_TrmE_N"/>
</dbReference>
<dbReference type="InterPro" id="IPR004520">
    <property type="entry name" value="GTPase_MnmE"/>
</dbReference>
<dbReference type="InterPro" id="IPR027368">
    <property type="entry name" value="MnmE_dom2"/>
</dbReference>
<dbReference type="InterPro" id="IPR025867">
    <property type="entry name" value="MnmE_helical"/>
</dbReference>
<dbReference type="InterPro" id="IPR027417">
    <property type="entry name" value="P-loop_NTPase"/>
</dbReference>
<dbReference type="InterPro" id="IPR005225">
    <property type="entry name" value="Small_GTP-bd"/>
</dbReference>
<dbReference type="InterPro" id="IPR027266">
    <property type="entry name" value="TrmE/GcvT_dom1"/>
</dbReference>
<dbReference type="NCBIfam" id="TIGR00450">
    <property type="entry name" value="mnmE_trmE_thdF"/>
    <property type="match status" value="1"/>
</dbReference>
<dbReference type="NCBIfam" id="TIGR00231">
    <property type="entry name" value="small_GTP"/>
    <property type="match status" value="1"/>
</dbReference>
<dbReference type="PANTHER" id="PTHR42714">
    <property type="entry name" value="TRNA MODIFICATION GTPASE GTPBP3"/>
    <property type="match status" value="1"/>
</dbReference>
<dbReference type="PANTHER" id="PTHR42714:SF2">
    <property type="entry name" value="TRNA MODIFICATION GTPASE GTPBP3, MITOCHONDRIAL"/>
    <property type="match status" value="1"/>
</dbReference>
<dbReference type="Pfam" id="PF01926">
    <property type="entry name" value="MMR_HSR1"/>
    <property type="match status" value="1"/>
</dbReference>
<dbReference type="Pfam" id="PF12631">
    <property type="entry name" value="MnmE_helical"/>
    <property type="match status" value="1"/>
</dbReference>
<dbReference type="Pfam" id="PF10396">
    <property type="entry name" value="TrmE_N"/>
    <property type="match status" value="1"/>
</dbReference>
<dbReference type="SUPFAM" id="SSF52540">
    <property type="entry name" value="P-loop containing nucleoside triphosphate hydrolases"/>
    <property type="match status" value="1"/>
</dbReference>
<dbReference type="PROSITE" id="PS51709">
    <property type="entry name" value="G_TRME"/>
    <property type="match status" value="1"/>
</dbReference>
<organism>
    <name type="scientific">Nitratidesulfovibrio vulgaris (strain DP4)</name>
    <name type="common">Desulfovibrio vulgaris</name>
    <dbReference type="NCBI Taxonomy" id="391774"/>
    <lineage>
        <taxon>Bacteria</taxon>
        <taxon>Pseudomonadati</taxon>
        <taxon>Thermodesulfobacteriota</taxon>
        <taxon>Desulfovibrionia</taxon>
        <taxon>Desulfovibrionales</taxon>
        <taxon>Desulfovibrionaceae</taxon>
        <taxon>Nitratidesulfovibrio</taxon>
    </lineage>
</organism>
<comment type="function">
    <text evidence="1">Exhibits a very high intrinsic GTPase hydrolysis rate. Involved in the addition of a carboxymethylaminomethyl (cmnm) group at the wobble position (U34) of certain tRNAs, forming tRNA-cmnm(5)s(2)U34.</text>
</comment>
<comment type="cofactor">
    <cofactor evidence="1">
        <name>K(+)</name>
        <dbReference type="ChEBI" id="CHEBI:29103"/>
    </cofactor>
    <text evidence="1">Binds 1 potassium ion per subunit.</text>
</comment>
<comment type="subunit">
    <text evidence="1">Homodimer. Heterotetramer of two MnmE and two MnmG subunits.</text>
</comment>
<comment type="subcellular location">
    <subcellularLocation>
        <location evidence="1">Cytoplasm</location>
    </subcellularLocation>
</comment>
<comment type="similarity">
    <text evidence="1">Belongs to the TRAFAC class TrmE-Era-EngA-EngB-Septin-like GTPase superfamily. TrmE GTPase family.</text>
</comment>
<keyword id="KW-0963">Cytoplasm</keyword>
<keyword id="KW-0342">GTP-binding</keyword>
<keyword id="KW-0378">Hydrolase</keyword>
<keyword id="KW-0460">Magnesium</keyword>
<keyword id="KW-0479">Metal-binding</keyword>
<keyword id="KW-0547">Nucleotide-binding</keyword>
<keyword id="KW-0630">Potassium</keyword>
<keyword id="KW-0819">tRNA processing</keyword>
<gene>
    <name evidence="1" type="primary">mnmE</name>
    <name evidence="1" type="synonym">trmE</name>
    <name type="ordered locus">Dvul_1915</name>
</gene>
<accession>A1VER5</accession>
<protein>
    <recommendedName>
        <fullName evidence="1">tRNA modification GTPase MnmE</fullName>
        <ecNumber evidence="1">3.6.-.-</ecNumber>
    </recommendedName>
</protein>
<reference key="1">
    <citation type="journal article" date="2009" name="Environ. Microbiol.">
        <title>Contribution of mobile genetic elements to Desulfovibrio vulgaris genome plasticity.</title>
        <authorList>
            <person name="Walker C.B."/>
            <person name="Stolyar S."/>
            <person name="Chivian D."/>
            <person name="Pinel N."/>
            <person name="Gabster J.A."/>
            <person name="Dehal P.S."/>
            <person name="He Z."/>
            <person name="Yang Z.K."/>
            <person name="Yen H.C."/>
            <person name="Zhou J."/>
            <person name="Wall J.D."/>
            <person name="Hazen T.C."/>
            <person name="Arkin A.P."/>
            <person name="Stahl D.A."/>
        </authorList>
    </citation>
    <scope>NUCLEOTIDE SEQUENCE [LARGE SCALE GENOMIC DNA]</scope>
    <source>
        <strain>DP4</strain>
    </source>
</reference>
<evidence type="ECO:0000255" key="1">
    <source>
        <dbReference type="HAMAP-Rule" id="MF_00379"/>
    </source>
</evidence>